<evidence type="ECO:0000255" key="1">
    <source>
        <dbReference type="HAMAP-Rule" id="MF_01309"/>
    </source>
</evidence>
<evidence type="ECO:0000256" key="2">
    <source>
        <dbReference type="SAM" id="MobiDB-lite"/>
    </source>
</evidence>
<evidence type="ECO:0000305" key="3"/>
<dbReference type="EMBL" id="CP001050">
    <property type="protein sequence ID" value="ACF31043.1"/>
    <property type="molecule type" value="Genomic_DNA"/>
</dbReference>
<dbReference type="RefSeq" id="WP_003690079.1">
    <property type="nucleotide sequence ID" value="NC_011035.1"/>
</dbReference>
<dbReference type="SMR" id="B4RQY4"/>
<dbReference type="GeneID" id="66754301"/>
<dbReference type="KEGG" id="ngk:NGK_2442"/>
<dbReference type="HOGENOM" id="CLU_058591_0_2_4"/>
<dbReference type="Proteomes" id="UP000002564">
    <property type="component" value="Chromosome"/>
</dbReference>
<dbReference type="GO" id="GO:0022627">
    <property type="term" value="C:cytosolic small ribosomal subunit"/>
    <property type="evidence" value="ECO:0007669"/>
    <property type="project" value="TreeGrafter"/>
</dbReference>
<dbReference type="GO" id="GO:0003729">
    <property type="term" value="F:mRNA binding"/>
    <property type="evidence" value="ECO:0007669"/>
    <property type="project" value="UniProtKB-UniRule"/>
</dbReference>
<dbReference type="GO" id="GO:0019843">
    <property type="term" value="F:rRNA binding"/>
    <property type="evidence" value="ECO:0007669"/>
    <property type="project" value="UniProtKB-UniRule"/>
</dbReference>
<dbReference type="GO" id="GO:0003735">
    <property type="term" value="F:structural constituent of ribosome"/>
    <property type="evidence" value="ECO:0007669"/>
    <property type="project" value="InterPro"/>
</dbReference>
<dbReference type="GO" id="GO:0006412">
    <property type="term" value="P:translation"/>
    <property type="evidence" value="ECO:0007669"/>
    <property type="project" value="UniProtKB-UniRule"/>
</dbReference>
<dbReference type="CDD" id="cd02412">
    <property type="entry name" value="KH-II_30S_S3"/>
    <property type="match status" value="1"/>
</dbReference>
<dbReference type="FunFam" id="3.30.1140.32:FF:000006">
    <property type="entry name" value="30S ribosomal protein S3"/>
    <property type="match status" value="1"/>
</dbReference>
<dbReference type="FunFam" id="3.30.300.20:FF:000001">
    <property type="entry name" value="30S ribosomal protein S3"/>
    <property type="match status" value="1"/>
</dbReference>
<dbReference type="Gene3D" id="3.30.300.20">
    <property type="match status" value="1"/>
</dbReference>
<dbReference type="Gene3D" id="3.30.1140.32">
    <property type="entry name" value="Ribosomal protein S3, C-terminal domain"/>
    <property type="match status" value="1"/>
</dbReference>
<dbReference type="HAMAP" id="MF_01309_B">
    <property type="entry name" value="Ribosomal_uS3_B"/>
    <property type="match status" value="1"/>
</dbReference>
<dbReference type="InterPro" id="IPR004087">
    <property type="entry name" value="KH_dom"/>
</dbReference>
<dbReference type="InterPro" id="IPR015946">
    <property type="entry name" value="KH_dom-like_a/b"/>
</dbReference>
<dbReference type="InterPro" id="IPR004044">
    <property type="entry name" value="KH_dom_type_2"/>
</dbReference>
<dbReference type="InterPro" id="IPR009019">
    <property type="entry name" value="KH_sf_prok-type"/>
</dbReference>
<dbReference type="InterPro" id="IPR036419">
    <property type="entry name" value="Ribosomal_S3_C_sf"/>
</dbReference>
<dbReference type="InterPro" id="IPR005704">
    <property type="entry name" value="Ribosomal_uS3_bac-typ"/>
</dbReference>
<dbReference type="InterPro" id="IPR001351">
    <property type="entry name" value="Ribosomal_uS3_C"/>
</dbReference>
<dbReference type="InterPro" id="IPR018280">
    <property type="entry name" value="Ribosomal_uS3_CS"/>
</dbReference>
<dbReference type="NCBIfam" id="TIGR01009">
    <property type="entry name" value="rpsC_bact"/>
    <property type="match status" value="1"/>
</dbReference>
<dbReference type="PANTHER" id="PTHR11760">
    <property type="entry name" value="30S/40S RIBOSOMAL PROTEIN S3"/>
    <property type="match status" value="1"/>
</dbReference>
<dbReference type="PANTHER" id="PTHR11760:SF19">
    <property type="entry name" value="SMALL RIBOSOMAL SUBUNIT PROTEIN US3C"/>
    <property type="match status" value="1"/>
</dbReference>
<dbReference type="Pfam" id="PF07650">
    <property type="entry name" value="KH_2"/>
    <property type="match status" value="1"/>
</dbReference>
<dbReference type="Pfam" id="PF00189">
    <property type="entry name" value="Ribosomal_S3_C"/>
    <property type="match status" value="1"/>
</dbReference>
<dbReference type="SMART" id="SM00322">
    <property type="entry name" value="KH"/>
    <property type="match status" value="1"/>
</dbReference>
<dbReference type="SUPFAM" id="SSF54814">
    <property type="entry name" value="Prokaryotic type KH domain (KH-domain type II)"/>
    <property type="match status" value="1"/>
</dbReference>
<dbReference type="SUPFAM" id="SSF54821">
    <property type="entry name" value="Ribosomal protein S3 C-terminal domain"/>
    <property type="match status" value="1"/>
</dbReference>
<dbReference type="PROSITE" id="PS50823">
    <property type="entry name" value="KH_TYPE_2"/>
    <property type="match status" value="1"/>
</dbReference>
<dbReference type="PROSITE" id="PS00548">
    <property type="entry name" value="RIBOSOMAL_S3"/>
    <property type="match status" value="1"/>
</dbReference>
<comment type="function">
    <text evidence="1">Binds the lower part of the 30S subunit head. Binds mRNA in the 70S ribosome, positioning it for translation.</text>
</comment>
<comment type="subunit">
    <text evidence="1">Part of the 30S ribosomal subunit. Forms a tight complex with proteins S10 and S14.</text>
</comment>
<comment type="similarity">
    <text evidence="1">Belongs to the universal ribosomal protein uS3 family.</text>
</comment>
<name>RS3_NEIG2</name>
<reference key="1">
    <citation type="journal article" date="2008" name="J. Bacteriol.">
        <title>Complete genome sequence of Neisseria gonorrhoeae NCCP11945.</title>
        <authorList>
            <person name="Chung G.T."/>
            <person name="Yoo J.S."/>
            <person name="Oh H.B."/>
            <person name="Lee Y.S."/>
            <person name="Cha S.H."/>
            <person name="Kim S.J."/>
            <person name="Yoo C.K."/>
        </authorList>
    </citation>
    <scope>NUCLEOTIDE SEQUENCE [LARGE SCALE GENOMIC DNA]</scope>
    <source>
        <strain>NCCP11945</strain>
    </source>
</reference>
<proteinExistence type="inferred from homology"/>
<organism>
    <name type="scientific">Neisseria gonorrhoeae (strain NCCP11945)</name>
    <dbReference type="NCBI Taxonomy" id="521006"/>
    <lineage>
        <taxon>Bacteria</taxon>
        <taxon>Pseudomonadati</taxon>
        <taxon>Pseudomonadota</taxon>
        <taxon>Betaproteobacteria</taxon>
        <taxon>Neisseriales</taxon>
        <taxon>Neisseriaceae</taxon>
        <taxon>Neisseria</taxon>
    </lineage>
</organism>
<gene>
    <name evidence="1" type="primary">rpsC</name>
    <name type="ordered locus">NGK_2442</name>
</gene>
<protein>
    <recommendedName>
        <fullName evidence="1">Small ribosomal subunit protein uS3</fullName>
    </recommendedName>
    <alternativeName>
        <fullName evidence="3">30S ribosomal protein S3</fullName>
    </alternativeName>
</protein>
<keyword id="KW-0687">Ribonucleoprotein</keyword>
<keyword id="KW-0689">Ribosomal protein</keyword>
<keyword id="KW-0694">RNA-binding</keyword>
<keyword id="KW-0699">rRNA-binding</keyword>
<feature type="chain" id="PRO_1000140994" description="Small ribosomal subunit protein uS3">
    <location>
        <begin position="1"/>
        <end position="230"/>
    </location>
</feature>
<feature type="domain" description="KH type-2" evidence="1">
    <location>
        <begin position="39"/>
        <end position="107"/>
    </location>
</feature>
<feature type="region of interest" description="Disordered" evidence="2">
    <location>
        <begin position="210"/>
        <end position="230"/>
    </location>
</feature>
<accession>B4RQY4</accession>
<sequence length="230" mass="25826">MGQKINPTGFRLAVTKDWASKWFAKSTDFSTVLKQDIDVRNYLRQKLANASVGRVIIERPAKSARITIHSARPGVVIGKKGEDIEVLKRDLQVLMGVPIHVNIEEIRRPELDAQIIADGIAQQLEKRVQFRRAMKRAMQNAMRSGAKGIKIMTSGRLNGADIARSEWYREGRVPLHTLRANVDYATSEAHTTYGVLGLKVWVYTEGNIKSSKPEHESKQRKAGRRNAAAN</sequence>